<name>DRI1_SCHPO</name>
<dbReference type="EMBL" id="CU329670">
    <property type="protein sequence ID" value="CAK9837810.1"/>
    <property type="molecule type" value="Genomic_DNA"/>
</dbReference>
<dbReference type="PIR" id="T37870">
    <property type="entry name" value="T37870"/>
</dbReference>
<dbReference type="RefSeq" id="NP_593574.1">
    <property type="nucleotide sequence ID" value="NM_001019006.2"/>
</dbReference>
<dbReference type="SMR" id="O13801"/>
<dbReference type="BioGRID" id="278723">
    <property type="interactions" value="53"/>
</dbReference>
<dbReference type="FunCoup" id="O13801">
    <property type="interactions" value="54"/>
</dbReference>
<dbReference type="IntAct" id="O13801">
    <property type="interactions" value="1"/>
</dbReference>
<dbReference type="STRING" id="284812.O13801"/>
<dbReference type="iPTMnet" id="O13801"/>
<dbReference type="PaxDb" id="4896-SPAC17H9.04c.1"/>
<dbReference type="EnsemblFungi" id="SPAC17H9.04c.1">
    <property type="protein sequence ID" value="SPAC17H9.04c.1:pep"/>
    <property type="gene ID" value="SPAC17H9.04c"/>
</dbReference>
<dbReference type="GeneID" id="2542253"/>
<dbReference type="KEGG" id="spo:2542253"/>
<dbReference type="PomBase" id="SPAC17H9.04c">
    <property type="gene designation" value="dri1"/>
</dbReference>
<dbReference type="VEuPathDB" id="FungiDB:SPAC17H9.04c"/>
<dbReference type="eggNOG" id="KOG4198">
    <property type="taxonomic scope" value="Eukaryota"/>
</dbReference>
<dbReference type="HOGENOM" id="CLU_022834_1_0_1"/>
<dbReference type="InParanoid" id="O13801"/>
<dbReference type="OMA" id="DWKCGEN"/>
<dbReference type="PhylomeDB" id="O13801"/>
<dbReference type="PRO" id="PR:O13801"/>
<dbReference type="Proteomes" id="UP000002485">
    <property type="component" value="Chromosome I"/>
</dbReference>
<dbReference type="GO" id="GO:0005694">
    <property type="term" value="C:chromosome"/>
    <property type="evidence" value="ECO:0007669"/>
    <property type="project" value="UniProtKB-SubCell"/>
</dbReference>
<dbReference type="GO" id="GO:0005737">
    <property type="term" value="C:cytoplasm"/>
    <property type="evidence" value="ECO:0000269"/>
    <property type="project" value="PomBase"/>
</dbReference>
<dbReference type="GO" id="GO:0005634">
    <property type="term" value="C:nucleus"/>
    <property type="evidence" value="ECO:0007669"/>
    <property type="project" value="UniProtKB-KW"/>
</dbReference>
<dbReference type="GO" id="GO:0140453">
    <property type="term" value="C:protein aggregate center"/>
    <property type="evidence" value="ECO:0000314"/>
    <property type="project" value="PomBase"/>
</dbReference>
<dbReference type="GO" id="GO:0003729">
    <property type="term" value="F:mRNA binding"/>
    <property type="evidence" value="ECO:0000318"/>
    <property type="project" value="GO_Central"/>
</dbReference>
<dbReference type="GO" id="GO:0003723">
    <property type="term" value="F:RNA binding"/>
    <property type="evidence" value="ECO:0007669"/>
    <property type="project" value="UniProtKB-UniRule"/>
</dbReference>
<dbReference type="GO" id="GO:0008270">
    <property type="term" value="F:zinc ion binding"/>
    <property type="evidence" value="ECO:0007669"/>
    <property type="project" value="UniProtKB-KW"/>
</dbReference>
<dbReference type="GO" id="GO:0034605">
    <property type="term" value="P:cellular response to heat"/>
    <property type="evidence" value="ECO:0000269"/>
    <property type="project" value="PomBase"/>
</dbReference>
<dbReference type="GO" id="GO:0071502">
    <property type="term" value="P:cellular response to temperature stimulus"/>
    <property type="evidence" value="ECO:0000315"/>
    <property type="project" value="PomBase"/>
</dbReference>
<dbReference type="GO" id="GO:0006325">
    <property type="term" value="P:chromatin organization"/>
    <property type="evidence" value="ECO:0007669"/>
    <property type="project" value="UniProtKB-KW"/>
</dbReference>
<dbReference type="GO" id="GO:0031445">
    <property type="term" value="P:regulation of heterochromatin formation"/>
    <property type="evidence" value="ECO:0000315"/>
    <property type="project" value="PomBase"/>
</dbReference>
<dbReference type="GO" id="GO:0031047">
    <property type="term" value="P:regulatory ncRNA-mediated gene silencing"/>
    <property type="evidence" value="ECO:0007669"/>
    <property type="project" value="UniProtKB-KW"/>
</dbReference>
<dbReference type="CDD" id="cd12452">
    <property type="entry name" value="RRM_ARP_like"/>
    <property type="match status" value="1"/>
</dbReference>
<dbReference type="FunFam" id="4.10.1060.10:FF:000021">
    <property type="entry name" value="MUTL protein homolog 3"/>
    <property type="match status" value="1"/>
</dbReference>
<dbReference type="FunFam" id="4.10.1060.10:FF:000024">
    <property type="entry name" value="RNA-binding protein"/>
    <property type="match status" value="2"/>
</dbReference>
<dbReference type="Gene3D" id="3.30.70.330">
    <property type="match status" value="1"/>
</dbReference>
<dbReference type="Gene3D" id="3.30.420.10">
    <property type="entry name" value="Ribonuclease H-like superfamily/Ribonuclease H"/>
    <property type="match status" value="1"/>
</dbReference>
<dbReference type="Gene3D" id="4.10.1060.10">
    <property type="entry name" value="Zinc finger, RanBP2-type"/>
    <property type="match status" value="3"/>
</dbReference>
<dbReference type="InterPro" id="IPR034351">
    <property type="entry name" value="Nrp1_RRM"/>
</dbReference>
<dbReference type="InterPro" id="IPR012677">
    <property type="entry name" value="Nucleotide-bd_a/b_plait_sf"/>
</dbReference>
<dbReference type="InterPro" id="IPR035979">
    <property type="entry name" value="RBD_domain_sf"/>
</dbReference>
<dbReference type="InterPro" id="IPR036397">
    <property type="entry name" value="RNaseH_sf"/>
</dbReference>
<dbReference type="InterPro" id="IPR000504">
    <property type="entry name" value="RRM_dom"/>
</dbReference>
<dbReference type="InterPro" id="IPR001876">
    <property type="entry name" value="Znf_RanBP2"/>
</dbReference>
<dbReference type="InterPro" id="IPR036443">
    <property type="entry name" value="Znf_RanBP2_sf"/>
</dbReference>
<dbReference type="PANTHER" id="PTHR23111:SF40">
    <property type="entry name" value="RNA-BINDING PROTEIN INVOLVED IN HETEROCHROMATIN ASSEMBLY-RELATED"/>
    <property type="match status" value="1"/>
</dbReference>
<dbReference type="PANTHER" id="PTHR23111">
    <property type="entry name" value="ZINC FINGER PROTEIN"/>
    <property type="match status" value="1"/>
</dbReference>
<dbReference type="Pfam" id="PF00076">
    <property type="entry name" value="RRM_1"/>
    <property type="match status" value="1"/>
</dbReference>
<dbReference type="Pfam" id="PF00641">
    <property type="entry name" value="Zn_ribbon_RanBP"/>
    <property type="match status" value="2"/>
</dbReference>
<dbReference type="SMART" id="SM00360">
    <property type="entry name" value="RRM"/>
    <property type="match status" value="1"/>
</dbReference>
<dbReference type="SMART" id="SM00547">
    <property type="entry name" value="ZnF_RBZ"/>
    <property type="match status" value="3"/>
</dbReference>
<dbReference type="SUPFAM" id="SSF90209">
    <property type="entry name" value="Ran binding protein zinc finger-like"/>
    <property type="match status" value="3"/>
</dbReference>
<dbReference type="SUPFAM" id="SSF54928">
    <property type="entry name" value="RNA-binding domain, RBD"/>
    <property type="match status" value="1"/>
</dbReference>
<dbReference type="PROSITE" id="PS50102">
    <property type="entry name" value="RRM"/>
    <property type="match status" value="1"/>
</dbReference>
<dbReference type="PROSITE" id="PS01358">
    <property type="entry name" value="ZF_RANBP2_1"/>
    <property type="match status" value="2"/>
</dbReference>
<dbReference type="PROSITE" id="PS50199">
    <property type="entry name" value="ZF_RANBP2_2"/>
    <property type="match status" value="2"/>
</dbReference>
<sequence>MPLPESVGDLVVLHFETNLDDHGISIGRAPCEIHEICWVILDGKTLEKQHCESCSIREDSSRHGICGSASSLTEAIFTLDNSIQERLNFQGKPFTFVVMNGRELRVLLPKEARDQGITLPSYMRHPRLFDLSSEYAKWQIRMGAVPPYTITLSHIFGKLDVDSLPPITESKAIELSPSDAPYITKGLTQCWRLANATTLLLRKAEKDSRGHSLPSVLTQPINCQADARSFYAERSKIVHVAGLTNDVTQLELESWFTNHGVHPVALWTLKTPEPYKSTGTGFVLFASHEDAADALAFNGYCLGDRMLEIIPSSTKVLDKASDILIPFPSSKNRPRPGDWNCPMCGFSNFQRRTSCFRCSFPGPTHVSAATGSNTFSPDFPYGNSYGNGSSHFIANYGGSVHHSNENTMQSDLQHQNGNNAVNHHHSSRSFGGNVPFRAGDWKCGSEGCGYHNFAKNVCCLRCGASRATAAVVADHASGPVNGSYSHNSYSHIPPVMSTSPPNHSVYPYSQLSINSVTANHGQNFGGQNGGNVSRFDDHGRFKEVSRPSVTTDQGDWLCECGFTNFRRRSNCLRCNAPHYSNMQIPASLPSDFNAYV</sequence>
<accession>O13801</accession>
<accession>A0AAN2HEB8</accession>
<evidence type="ECO:0000255" key="1">
    <source>
        <dbReference type="PROSITE-ProRule" id="PRU00176"/>
    </source>
</evidence>
<evidence type="ECO:0000255" key="2">
    <source>
        <dbReference type="PROSITE-ProRule" id="PRU00322"/>
    </source>
</evidence>
<evidence type="ECO:0000269" key="3">
    <source>
    </source>
</evidence>
<evidence type="ECO:0000269" key="4">
    <source>
    </source>
</evidence>
<evidence type="ECO:0000269" key="5">
    <source>
    </source>
</evidence>
<evidence type="ECO:0000303" key="6">
    <source>
    </source>
</evidence>
<evidence type="ECO:0000303" key="7">
    <source>
    </source>
</evidence>
<evidence type="ECO:0000305" key="8"/>
<evidence type="ECO:0000312" key="9">
    <source>
        <dbReference type="PomBase" id="SPAC17H9.04c"/>
    </source>
</evidence>
<organism>
    <name type="scientific">Schizosaccharomyces pombe (strain 972 / ATCC 24843)</name>
    <name type="common">Fission yeast</name>
    <dbReference type="NCBI Taxonomy" id="284812"/>
    <lineage>
        <taxon>Eukaryota</taxon>
        <taxon>Fungi</taxon>
        <taxon>Dikarya</taxon>
        <taxon>Ascomycota</taxon>
        <taxon>Taphrinomycotina</taxon>
        <taxon>Schizosaccharomycetes</taxon>
        <taxon>Schizosaccharomycetales</taxon>
        <taxon>Schizosaccharomycetaceae</taxon>
        <taxon>Schizosaccharomyces</taxon>
    </lineage>
</organism>
<keyword id="KW-0156">Chromatin regulator</keyword>
<keyword id="KW-0158">Chromosome</keyword>
<keyword id="KW-0963">Cytoplasm</keyword>
<keyword id="KW-0479">Metal-binding</keyword>
<keyword id="KW-0539">Nucleus</keyword>
<keyword id="KW-0597">Phosphoprotein</keyword>
<keyword id="KW-1185">Reference proteome</keyword>
<keyword id="KW-0677">Repeat</keyword>
<keyword id="KW-0694">RNA-binding</keyword>
<keyword id="KW-0943">RNA-mediated gene silencing</keyword>
<keyword id="KW-0862">Zinc</keyword>
<keyword id="KW-0863">Zinc-finger</keyword>
<gene>
    <name evidence="6" type="primary">dri1</name>
    <name evidence="9" type="synonym">nrp1</name>
    <name evidence="7" type="synonym">skf7</name>
    <name evidence="9" type="ORF">SPAC17H9.04c</name>
</gene>
<protein>
    <recommendedName>
        <fullName evidence="9">RNA-binding protein involved in heterochromatin assembly dri1</fullName>
    </recommendedName>
    <alternativeName>
        <fullName evidence="6">Dpb4-interacting, RRM, and IDR-containing factor</fullName>
    </alternativeName>
</protein>
<feature type="chain" id="PRO_0000314102" description="RNA-binding protein involved in heterochromatin assembly dri1">
    <location>
        <begin position="1"/>
        <end position="596"/>
    </location>
</feature>
<feature type="domain" description="RRM" evidence="1">
    <location>
        <begin position="236"/>
        <end position="314"/>
    </location>
</feature>
<feature type="zinc finger region" description="RanBP2-type 1" evidence="2">
    <location>
        <begin position="335"/>
        <end position="364"/>
    </location>
</feature>
<feature type="zinc finger region" description="RanBP2-type 2" evidence="2">
    <location>
        <begin position="437"/>
        <end position="468"/>
    </location>
</feature>
<feature type="zinc finger region" description="RanBP2-type 3" evidence="2">
    <location>
        <begin position="552"/>
        <end position="580"/>
    </location>
</feature>
<feature type="modified residue" description="Phosphoserine" evidence="3">
    <location>
        <position position="176"/>
    </location>
</feature>
<feature type="modified residue" description="Phosphoserine" evidence="3">
    <location>
        <position position="429"/>
    </location>
</feature>
<comment type="function">
    <text evidence="4 5">Mediates heterochromatin assembly by promoting RNAi-mediated heterochromatin silencing and histone deacetylation (PubMed:33693625). Binds pericetromeric transcripts and recruits the RNA-induced transcriptional silencing (RITS) complex to heterochromatin (PubMed:33693625). Recruits sir2 to chromatin to promote deacetylation of 'Lys-9' of histone H3 (PubMed:33693625). Involved in bipolar spindle assembly during mitosis. Required for proper localization of kinesin-14/Klp2 on the spindle microtubules (PubMed:33946513).</text>
</comment>
<comment type="subunit">
    <text evidence="4">Interacts with dpb4 (PubMed:33693625). Interacts with chp1 (PubMed:33693625).</text>
</comment>
<comment type="subcellular location">
    <subcellularLocation>
        <location evidence="4">Chromosome</location>
    </subcellularLocation>
    <subcellularLocation>
        <location evidence="4">Nucleus</location>
    </subcellularLocation>
    <subcellularLocation>
        <location evidence="5">Cytoplasm</location>
    </subcellularLocation>
    <subcellularLocation>
        <location evidence="5">Cytoplasmic granule</location>
    </subcellularLocation>
    <text evidence="5">Dri1 is dynamically shuttled between the nucleus and the cytoplasm and exported from the nucleus through the Rae1-dependent mRNA export pathway. Localizes to the cytoplasm throughout the cell cycle. Upon mild heat stress, a portion of DRI1 assembles into protein aggregate centers (PACs), sequestering it into the cytoplasmic aggregates and limiting cell division at high temperatures.</text>
</comment>
<comment type="domain">
    <text evidence="5">The RNA-binding domains (RRM domain and RanBP2-type zinc finger domains) are essential for DRI1 cytoplasmic localization and function.</text>
</comment>
<comment type="disruption phenotype">
    <text evidence="4">Abolishes siRNA production from the centromeric outer repeat region (PubMed:33693625). Decreases H3K9 methylation and impairs heterochromatin silencing; simultaneous disruption of dpb4 exacerbates the effect (PubMed:33693625).</text>
</comment>
<comment type="miscellaneous">
    <text evidence="8">Shown to localize to the nucleolus in PMID:16823372 by overexpression of a C-terminally tagged allele, however this allele was subsequently shown to be non-functional in PMID:33693625.</text>
</comment>
<proteinExistence type="evidence at protein level"/>
<reference key="1">
    <citation type="journal article" date="2002" name="Nature">
        <title>The genome sequence of Schizosaccharomyces pombe.</title>
        <authorList>
            <person name="Wood V."/>
            <person name="Gwilliam R."/>
            <person name="Rajandream M.A."/>
            <person name="Lyne M.H."/>
            <person name="Lyne R."/>
            <person name="Stewart A."/>
            <person name="Sgouros J.G."/>
            <person name="Peat N."/>
            <person name="Hayles J."/>
            <person name="Baker S.G."/>
            <person name="Basham D."/>
            <person name="Bowman S."/>
            <person name="Brooks K."/>
            <person name="Brown D."/>
            <person name="Brown S."/>
            <person name="Chillingworth T."/>
            <person name="Churcher C.M."/>
            <person name="Collins M."/>
            <person name="Connor R."/>
            <person name="Cronin A."/>
            <person name="Davis P."/>
            <person name="Feltwell T."/>
            <person name="Fraser A."/>
            <person name="Gentles S."/>
            <person name="Goble A."/>
            <person name="Hamlin N."/>
            <person name="Harris D.E."/>
            <person name="Hidalgo J."/>
            <person name="Hodgson G."/>
            <person name="Holroyd S."/>
            <person name="Hornsby T."/>
            <person name="Howarth S."/>
            <person name="Huckle E.J."/>
            <person name="Hunt S."/>
            <person name="Jagels K."/>
            <person name="James K.D."/>
            <person name="Jones L."/>
            <person name="Jones M."/>
            <person name="Leather S."/>
            <person name="McDonald S."/>
            <person name="McLean J."/>
            <person name="Mooney P."/>
            <person name="Moule S."/>
            <person name="Mungall K.L."/>
            <person name="Murphy L.D."/>
            <person name="Niblett D."/>
            <person name="Odell C."/>
            <person name="Oliver K."/>
            <person name="O'Neil S."/>
            <person name="Pearson D."/>
            <person name="Quail M.A."/>
            <person name="Rabbinowitsch E."/>
            <person name="Rutherford K.M."/>
            <person name="Rutter S."/>
            <person name="Saunders D."/>
            <person name="Seeger K."/>
            <person name="Sharp S."/>
            <person name="Skelton J."/>
            <person name="Simmonds M.N."/>
            <person name="Squares R."/>
            <person name="Squares S."/>
            <person name="Stevens K."/>
            <person name="Taylor K."/>
            <person name="Taylor R.G."/>
            <person name="Tivey A."/>
            <person name="Walsh S.V."/>
            <person name="Warren T."/>
            <person name="Whitehead S."/>
            <person name="Woodward J.R."/>
            <person name="Volckaert G."/>
            <person name="Aert R."/>
            <person name="Robben J."/>
            <person name="Grymonprez B."/>
            <person name="Weltjens I."/>
            <person name="Vanstreels E."/>
            <person name="Rieger M."/>
            <person name="Schaefer M."/>
            <person name="Mueller-Auer S."/>
            <person name="Gabel C."/>
            <person name="Fuchs M."/>
            <person name="Duesterhoeft A."/>
            <person name="Fritzc C."/>
            <person name="Holzer E."/>
            <person name="Moestl D."/>
            <person name="Hilbert H."/>
            <person name="Borzym K."/>
            <person name="Langer I."/>
            <person name="Beck A."/>
            <person name="Lehrach H."/>
            <person name="Reinhardt R."/>
            <person name="Pohl T.M."/>
            <person name="Eger P."/>
            <person name="Zimmermann W."/>
            <person name="Wedler H."/>
            <person name="Wambutt R."/>
            <person name="Purnelle B."/>
            <person name="Goffeau A."/>
            <person name="Cadieu E."/>
            <person name="Dreano S."/>
            <person name="Gloux S."/>
            <person name="Lelaure V."/>
            <person name="Mottier S."/>
            <person name="Galibert F."/>
            <person name="Aves S.J."/>
            <person name="Xiang Z."/>
            <person name="Hunt C."/>
            <person name="Moore K."/>
            <person name="Hurst S.M."/>
            <person name="Lucas M."/>
            <person name="Rochet M."/>
            <person name="Gaillardin C."/>
            <person name="Tallada V.A."/>
            <person name="Garzon A."/>
            <person name="Thode G."/>
            <person name="Daga R.R."/>
            <person name="Cruzado L."/>
            <person name="Jimenez J."/>
            <person name="Sanchez M."/>
            <person name="del Rey F."/>
            <person name="Benito J."/>
            <person name="Dominguez A."/>
            <person name="Revuelta J.L."/>
            <person name="Moreno S."/>
            <person name="Armstrong J."/>
            <person name="Forsburg S.L."/>
            <person name="Cerutti L."/>
            <person name="Lowe T."/>
            <person name="McCombie W.R."/>
            <person name="Paulsen I."/>
            <person name="Potashkin J."/>
            <person name="Shpakovski G.V."/>
            <person name="Ussery D."/>
            <person name="Barrell B.G."/>
            <person name="Nurse P."/>
        </authorList>
    </citation>
    <scope>NUCLEOTIDE SEQUENCE [LARGE SCALE GENOMIC DNA]</scope>
    <source>
        <strain>972 / ATCC 24843</strain>
    </source>
</reference>
<reference key="2">
    <citation type="journal article" date="2008" name="J. Proteome Res.">
        <title>Phosphoproteome analysis of fission yeast.</title>
        <authorList>
            <person name="Wilson-Grady J.T."/>
            <person name="Villen J."/>
            <person name="Gygi S.P."/>
        </authorList>
    </citation>
    <scope>PHOSPHORYLATION [LARGE SCALE ANALYSIS] AT SER-176 AND SER-429</scope>
    <scope>IDENTIFICATION BY MASS SPECTROMETRY</scope>
</reference>
<reference key="3">
    <citation type="journal article" date="2021" name="Genetics">
        <title>Dri1 mediates heterochromatin assembly via RNAi and histone deacetylation.</title>
        <authorList>
            <person name="Ban H."/>
            <person name="Sun W."/>
            <person name="Chen Y.H."/>
            <person name="Chen Y."/>
            <person name="Li F."/>
        </authorList>
    </citation>
    <scope>FUNCTION</scope>
    <scope>INTERACTION WITH DPB4 AND CHP1</scope>
    <scope>SUBCELLULAR LOCATION</scope>
    <scope>DISRUPTION PHENOTYPE</scope>
</reference>
<reference key="4">
    <citation type="journal article" date="2021" name="Int. J. Mol. Sci.">
        <title>The putative RNA-binding protein Dri1 promotes the loading of kinesin-14/Klp2 to the mitotic spindle and is sequestered into heat-induced protein aggregates in fission yeast.</title>
        <authorList>
            <person name="Yukawa M."/>
            <person name="Ohishi M."/>
            <person name="Yamada Y."/>
            <person name="Toda T."/>
        </authorList>
    </citation>
    <scope>FUNCTION</scope>
    <scope>DOMAIN</scope>
    <scope>SUBCELLULAR LOCATION</scope>
</reference>